<feature type="chain" id="PRO_0000454499" description="X-box-binding protein 1">
    <location>
        <begin position="1"/>
        <end position="287"/>
    </location>
</feature>
<feature type="domain" description="bZIP" evidence="2">
    <location>
        <begin position="61"/>
        <end position="117"/>
    </location>
</feature>
<feature type="region of interest" description="Basic motif" evidence="2">
    <location>
        <begin position="63"/>
        <end position="88"/>
    </location>
</feature>
<feature type="region of interest" description="Disordered" evidence="3">
    <location>
        <begin position="63"/>
        <end position="87"/>
    </location>
</feature>
<feature type="region of interest" description="Leucine-zipper" evidence="2">
    <location>
        <begin position="89"/>
        <end position="117"/>
    </location>
</feature>
<feature type="compositionally biased region" description="Basic and acidic residues" evidence="3">
    <location>
        <begin position="78"/>
        <end position="87"/>
    </location>
</feature>
<feature type="splice variant" id="VSP_061350" description="In isoform 2." evidence="13">
    <original>AFINEPQQWEQARSTSINNNISNQLRRMDSKKNNTISVDMYLTIISILCNHMDRNKKMDTSNKSSNISRAQAESSIDSLLATLRKEQTVMQRLVQADPCTHLQKRVKHFRRIP</original>
    <variation>VGTGPIHLHQQQHQQPTPSYGFQEEQHNQCGYVSNYHLDSMQPHGSQQEDGHLEQILEHLKSPSGEFDRFVAGYIEEGADGYAASCSSGSMYTSSETRETLSPNSLACPRR</variation>
    <location>
        <begin position="175"/>
        <end position="287"/>
    </location>
</feature>
<feature type="mutagenesis site" description="In zc12; strongly blocks hsp-4 mRNA induction. Severely attenuates larval development and growth, and causes disruption of ER homeostasis, when exposed to Gram-negative bacterium P.aeruginosa PA14; this effect is abrogated in a pmk-1 mutant background. Disrupts ER homeostasis and larval development, in the absence of pathogenic bacteria, when combined with RNAi-mediated knockdown of vhp-1, in a pmk-1-dependent manner. Increases constitutive ire-1 splicing activity, in a smg-2 mutant background. Positively modulates pek-1-mediated phosphorylation of the alpha subunit of eukaryotic translation-initiation factor 2 (eIF2alpha). Increases longevity by oleic acid (OA) dietary supplementation." evidence="5 6 7 8 11">
    <location>
        <begin position="34"/>
        <end position="287"/>
    </location>
</feature>
<comment type="function">
    <text evidence="4 5 6 7">Required for transcriptional regulation of the unfolded protein response (UPR) in the endoplasmic reticulum (ER) under stressed conditions, acting downstream of ire-1, and also maintaining ER homeostasis via a negative feedback loop, in parallel with ER kinase pek-1 (PubMed:11779465, PubMed:11780124, PubMed:16184190, PubMed:22125500). May also regulate Golgi protein trafficking distal to the ER (PubMed:16184190). Protects the host organism from the detrimental effects of mounting an innate immune response to microbes, such as the Gram-negative bacterium P.aeruginosa, probably by modulating the UPR (PubMed:20182512, PubMed:22125500).</text>
</comment>
<comment type="function">
    <molecule>Isoform 1</molecule>
    <text evidence="1">Plays a role in the unconventional cytoplasmic splicing processing of its own mRNA triggered by the endoplasmic reticulum (ER) transmembrane endoribonuclease ire-1: upon ER stress, the emerging xbp-1 polypeptide chain, as part of a mRNA-ribosome-nascent chain (R-RNC) complex, cotranslationally recruits its own unprocessed mRNA through transient docking to the ER membrane and translational pausing, therefore facilitating efficient ire-1-mediated xbp-1 mRNA isoform 2 production.</text>
</comment>
<comment type="function">
    <molecule>Isoform 2</molecule>
    <text evidence="1 8 10 11">Functions as a stress-inducible potent transcriptional activator during endoplasmic reticulum (ER) stress by inducing unfolded protein response (UPR) target genes via binding to the UPR element (UPRE) (By similarity). Plays a role in modulation of the UPR, lipid metabolism, proteostasis, and lifespan (PubMed:23791175, PubMed:31303493, PubMed:31315038, PubMed:31570707). In neurons, rescues stress resistance, increases longevity, and, drives expression of lysosomal genes in the intestine and activates the UPR in distal, non-neuronal cell types through a cell-nonautonomous mechanism (PubMed:23791175, PubMed:31303493, PubMed:31315038). In neurons or intestine, plays a role in protection against proteotoxicity, acting via positive modulation of genes involved in lysosomal function, including lipases and the fatty-acid desaturase fat-6 (PubMed:31303493, PubMed:31315038). Protection against proteotoxicity in neurons is dependent upon the transcription factor atf-6 (PubMed:31570707).</text>
</comment>
<comment type="subunit">
    <molecule>Isoform 1</molecule>
    <text evidence="9">Interacts with SUMO-conjugating enzyme ubc-9; the interaction is direct.</text>
</comment>
<comment type="subunit">
    <molecule>Isoform 2</molecule>
    <text evidence="9">Interacts with SUMO-conjugating enzyme ubc-9; the interaction is direct.</text>
</comment>
<comment type="subcellular location">
    <subcellularLocation>
        <location evidence="2">Nucleus</location>
    </subcellularLocation>
</comment>
<comment type="alternative products">
    <event type="alternative splicing"/>
    <isoform>
        <id>G5EE07-1</id>
        <name evidence="14">1</name>
        <name evidence="12">xbp-1u</name>
        <name evidence="12">unspliced xbp-1</name>
        <sequence type="displayed"/>
    </isoform>
    <isoform>
        <id>G5EE07-2</id>
        <name evidence="15">2</name>
        <name evidence="12">xbp-1s</name>
        <name evidence="12">spliced xbp-1</name>
        <sequence type="described" ref="VSP_061350"/>
    </isoform>
</comment>
<comment type="PTM">
    <molecule>Isoform 2</molecule>
    <text evidence="9">Sumoylated (PubMed:24933177). Sumoylation may negatively modulate the transcription of genes involved in the ER-stress-response (PubMed:24933177).</text>
</comment>
<comment type="disruption phenotype">
    <text evidence="4 5 9 10">RNAi-mediated knockdown inhibits induction of expression of the endoplasmic reticulum chaperone BiP homolog hsp-4 and heat shock protein hsp-3 during the unfolded protein response (UPR) (PubMed:11779465, PubMed:11780124). Larval development is normal, but in a pek-1 genetic background, causes arrested development at or prior to the L2 larval stage (PubMed:11779465). Abolishes crt-1 promoter activity (PubMed:24933177). Reduces lifespan, perhaps acting independently of macroautophagy (PubMed:31303493). In combination with RNAi-mediated knockdown of atf-6, causes lethality early in larval development (PubMed:16184190). Intestine-specific RNAi-mediated knockdown prevents up-regulation of several lysosomal transcripts (PubMed:31303493).</text>
</comment>
<evidence type="ECO:0000250" key="1">
    <source>
        <dbReference type="UniProtKB" id="P17861"/>
    </source>
</evidence>
<evidence type="ECO:0000255" key="2">
    <source>
        <dbReference type="PROSITE-ProRule" id="PRU00978"/>
    </source>
</evidence>
<evidence type="ECO:0000256" key="3">
    <source>
        <dbReference type="SAM" id="MobiDB-lite"/>
    </source>
</evidence>
<evidence type="ECO:0000269" key="4">
    <source>
    </source>
</evidence>
<evidence type="ECO:0000269" key="5">
    <source>
    </source>
</evidence>
<evidence type="ECO:0000269" key="6">
    <source>
    </source>
</evidence>
<evidence type="ECO:0000269" key="7">
    <source>
    </source>
</evidence>
<evidence type="ECO:0000269" key="8">
    <source>
    </source>
</evidence>
<evidence type="ECO:0000269" key="9">
    <source>
    </source>
</evidence>
<evidence type="ECO:0000269" key="10">
    <source>
    </source>
</evidence>
<evidence type="ECO:0000269" key="11">
    <source>
    </source>
</evidence>
<evidence type="ECO:0000303" key="12">
    <source>
    </source>
</evidence>
<evidence type="ECO:0000305" key="13"/>
<evidence type="ECO:0000312" key="14">
    <source>
        <dbReference type="EMBL" id="AAL60200.1"/>
    </source>
</evidence>
<evidence type="ECO:0000312" key="15">
    <source>
        <dbReference type="EMBL" id="AAL60201.1"/>
    </source>
</evidence>
<evidence type="ECO:0000312" key="16">
    <source>
        <dbReference type="Proteomes" id="UP000001940"/>
    </source>
</evidence>
<evidence type="ECO:0000312" key="17">
    <source>
        <dbReference type="WormBase" id="R74.3"/>
    </source>
</evidence>
<keyword id="KW-0025">Alternative splicing</keyword>
<keyword id="KW-0238">DNA-binding</keyword>
<keyword id="KW-0539">Nucleus</keyword>
<keyword id="KW-1185">Reference proteome</keyword>
<keyword id="KW-0804">Transcription</keyword>
<keyword id="KW-0805">Transcription regulation</keyword>
<keyword id="KW-0832">Ubl conjugation</keyword>
<sequence length="287" mass="33326">MSNYPKRIYVLPARHVAAPQPQRMAPKRALPTEQVVAQLLGDDMGPSGPRKRERLNHLSQEEKMDRRKLKNRVAAQNARDKKKERSAKIEDVMRDLVEENRRLRAENERLRRQNKNLMNQQNESVMYMEENNENLMNSNDACIYQNVVYEEEVVGEVAPVVVVGGEDRRAFESAAFINEPQQWEQARSTSINNNISNQLRRMDSKKNNTISVDMYLTIISILCNHMDRNKKMDTSNKSSNISRAQAESSIDSLLATLRKEQTVMQRLVQADPCTHLQKRVKHFRRIP</sequence>
<name>XBP1_CAEEL</name>
<dbReference type="EMBL" id="AF443190">
    <property type="protein sequence ID" value="AAL60200.1"/>
    <property type="molecule type" value="mRNA"/>
</dbReference>
<dbReference type="EMBL" id="AF443191">
    <property type="protein sequence ID" value="AAL60201.1"/>
    <property type="molecule type" value="mRNA"/>
</dbReference>
<dbReference type="EMBL" id="BX284603">
    <property type="protein sequence ID" value="CAL63999.1"/>
    <property type="molecule type" value="Genomic_DNA"/>
</dbReference>
<dbReference type="RefSeq" id="NP_001076646.1">
    <molecule id="G5EE07-1"/>
    <property type="nucleotide sequence ID" value="NM_001083177.4"/>
</dbReference>
<dbReference type="SMR" id="G5EE07"/>
<dbReference type="FunCoup" id="G5EE07">
    <property type="interactions" value="772"/>
</dbReference>
<dbReference type="IntAct" id="G5EE07">
    <property type="interactions" value="4"/>
</dbReference>
<dbReference type="EnsemblMetazoa" id="R74.3.1">
    <molecule id="G5EE07-1"/>
    <property type="protein sequence ID" value="R74.3.1"/>
    <property type="gene ID" value="WBGene00006959"/>
</dbReference>
<dbReference type="EnsemblMetazoa" id="R74.3.2">
    <molecule id="G5EE07-1"/>
    <property type="protein sequence ID" value="R74.3.2"/>
    <property type="gene ID" value="WBGene00006959"/>
</dbReference>
<dbReference type="GeneID" id="175541"/>
<dbReference type="KEGG" id="cel:CELE_R74.3"/>
<dbReference type="AGR" id="WB:WBGene00006959"/>
<dbReference type="CTD" id="175541"/>
<dbReference type="WormBase" id="R74.3">
    <molecule id="G5EE07-1"/>
    <property type="protein sequence ID" value="CE40514"/>
    <property type="gene ID" value="WBGene00006959"/>
    <property type="gene designation" value="xbp-1"/>
</dbReference>
<dbReference type="GeneTree" id="ENSGT00940000168780"/>
<dbReference type="HOGENOM" id="CLU_708281_0_0_1"/>
<dbReference type="InParanoid" id="G5EE07"/>
<dbReference type="OrthoDB" id="20960at2759"/>
<dbReference type="PRO" id="PR:G5EE07"/>
<dbReference type="Proteomes" id="UP000001940">
    <property type="component" value="Chromosome III"/>
</dbReference>
<dbReference type="Bgee" id="WBGene00006959">
    <property type="expression patterns" value="Expressed in pharyngeal muscle cell (C elegans) and 4 other cell types or tissues"/>
</dbReference>
<dbReference type="GO" id="GO:0005634">
    <property type="term" value="C:nucleus"/>
    <property type="evidence" value="ECO:0000318"/>
    <property type="project" value="GO_Central"/>
</dbReference>
<dbReference type="GO" id="GO:0000981">
    <property type="term" value="F:DNA-binding transcription factor activity, RNA polymerase II-specific"/>
    <property type="evidence" value="ECO:0000318"/>
    <property type="project" value="GO_Central"/>
</dbReference>
<dbReference type="GO" id="GO:0000977">
    <property type="term" value="F:RNA polymerase II transcription regulatory region sequence-specific DNA binding"/>
    <property type="evidence" value="ECO:0000314"/>
    <property type="project" value="WormBase"/>
</dbReference>
<dbReference type="GO" id="GO:0050829">
    <property type="term" value="P:defense response to Gram-negative bacterium"/>
    <property type="evidence" value="ECO:0000315"/>
    <property type="project" value="UniProtKB"/>
</dbReference>
<dbReference type="GO" id="GO:0008340">
    <property type="term" value="P:determination of adult lifespan"/>
    <property type="evidence" value="ECO:0000315"/>
    <property type="project" value="UniProtKB"/>
</dbReference>
<dbReference type="GO" id="GO:0030968">
    <property type="term" value="P:endoplasmic reticulum unfolded protein response"/>
    <property type="evidence" value="ECO:0000315"/>
    <property type="project" value="UniProtKB"/>
</dbReference>
<dbReference type="GO" id="GO:0036503">
    <property type="term" value="P:ERAD pathway"/>
    <property type="evidence" value="ECO:0000315"/>
    <property type="project" value="UniProtKB"/>
</dbReference>
<dbReference type="GO" id="GO:0036498">
    <property type="term" value="P:IRE1-mediated unfolded protein response"/>
    <property type="evidence" value="ECO:0000315"/>
    <property type="project" value="UniProtKB"/>
</dbReference>
<dbReference type="GO" id="GO:0055088">
    <property type="term" value="P:lipid homeostasis"/>
    <property type="evidence" value="ECO:0000315"/>
    <property type="project" value="UniProtKB"/>
</dbReference>
<dbReference type="GO" id="GO:0051241">
    <property type="term" value="P:negative regulation of multicellular organismal process"/>
    <property type="evidence" value="ECO:0000315"/>
    <property type="project" value="WormBase"/>
</dbReference>
<dbReference type="GO" id="GO:0045944">
    <property type="term" value="P:positive regulation of transcription by RNA polymerase II"/>
    <property type="evidence" value="ECO:0000315"/>
    <property type="project" value="UniProtKB"/>
</dbReference>
<dbReference type="GO" id="GO:0034976">
    <property type="term" value="P:response to endoplasmic reticulum stress"/>
    <property type="evidence" value="ECO:0000315"/>
    <property type="project" value="UniProtKB"/>
</dbReference>
<dbReference type="GO" id="GO:0009408">
    <property type="term" value="P:response to heat"/>
    <property type="evidence" value="ECO:0000316"/>
    <property type="project" value="UniProtKB"/>
</dbReference>
<dbReference type="GO" id="GO:0035966">
    <property type="term" value="P:response to topologically incorrect protein"/>
    <property type="evidence" value="ECO:0000315"/>
    <property type="project" value="UniProtKB"/>
</dbReference>
<dbReference type="CDD" id="cd14691">
    <property type="entry name" value="bZIP_XBP1"/>
    <property type="match status" value="1"/>
</dbReference>
<dbReference type="Gene3D" id="1.20.5.170">
    <property type="match status" value="1"/>
</dbReference>
<dbReference type="InterPro" id="IPR004827">
    <property type="entry name" value="bZIP"/>
</dbReference>
<dbReference type="InterPro" id="IPR046347">
    <property type="entry name" value="bZIP_sf"/>
</dbReference>
<dbReference type="InterPro" id="IPR052470">
    <property type="entry name" value="ER_Stress-Reg_TF"/>
</dbReference>
<dbReference type="PANTHER" id="PTHR46542">
    <property type="entry name" value="X-BOX BINDING PROTEIN 1"/>
    <property type="match status" value="1"/>
</dbReference>
<dbReference type="PANTHER" id="PTHR46542:SF1">
    <property type="entry name" value="X-BOX BINDING PROTEIN 1"/>
    <property type="match status" value="1"/>
</dbReference>
<dbReference type="Pfam" id="PF07716">
    <property type="entry name" value="bZIP_2"/>
    <property type="match status" value="1"/>
</dbReference>
<dbReference type="SMART" id="SM00338">
    <property type="entry name" value="BRLZ"/>
    <property type="match status" value="1"/>
</dbReference>
<dbReference type="SUPFAM" id="SSF57959">
    <property type="entry name" value="Leucine zipper domain"/>
    <property type="match status" value="1"/>
</dbReference>
<dbReference type="PROSITE" id="PS50217">
    <property type="entry name" value="BZIP"/>
    <property type="match status" value="1"/>
</dbReference>
<dbReference type="PROSITE" id="PS00036">
    <property type="entry name" value="BZIP_BASIC"/>
    <property type="match status" value="1"/>
</dbReference>
<reference evidence="14 15" key="1">
    <citation type="journal article" date="2002" name="Nature">
        <title>IRE1 couples endoplasmic reticulum load to secretory capacity by processing the XBP-1 mRNA.</title>
        <authorList>
            <person name="Calfon M."/>
            <person name="Zeng H."/>
            <person name="Urano F."/>
            <person name="Till J.H."/>
            <person name="Hubbard S.R."/>
            <person name="Harding H.P."/>
            <person name="Clark S.G."/>
            <person name="Ron D."/>
        </authorList>
    </citation>
    <scope>NUCLEOTIDE SEQUENCE [MRNA] (ISOFORMS 1 AND 2)</scope>
    <scope>FUNCTION</scope>
    <scope>DISRUPTION PHENOTYPE</scope>
    <scope>MUTAGENESIS OF 34-GLN--PRO-287</scope>
</reference>
<reference evidence="16" key="2">
    <citation type="journal article" date="1998" name="Science">
        <title>Genome sequence of the nematode C. elegans: a platform for investigating biology.</title>
        <authorList>
            <consortium name="The C. elegans sequencing consortium"/>
        </authorList>
    </citation>
    <scope>NUCLEOTIDE SEQUENCE [LARGE SCALE GENOMIC DNA]</scope>
    <source>
        <strain evidence="16">Bristol N2</strain>
    </source>
</reference>
<reference evidence="13" key="3">
    <citation type="journal article" date="2001" name="Cell">
        <title>Complementary signaling pathways regulate the unfolded protein response and are required for C. elegans development.</title>
        <authorList>
            <person name="Shen X."/>
            <person name="Ellis R.E."/>
            <person name="Lee K."/>
            <person name="Liu C.-Y."/>
            <person name="Yang K."/>
            <person name="Solomon A."/>
            <person name="Yoshida H."/>
            <person name="Morimoto R."/>
            <person name="Kurnit D.M."/>
            <person name="Mori K."/>
            <person name="Kaufman R.J."/>
        </authorList>
    </citation>
    <scope>FUNCTION (ISOFORM 1)</scope>
    <scope>DISRUPTION PHENOTYPE</scope>
</reference>
<reference evidence="13" key="4">
    <citation type="journal article" date="2005" name="PLoS Genet.">
        <title>Genetic interactions due to constitutive and inducible gene regulation mediated by the unfolded protein response in C. elegans.</title>
        <authorList>
            <person name="Shen X."/>
            <person name="Ellis R.E."/>
            <person name="Sakaki K."/>
            <person name="Kaufman R.J."/>
        </authorList>
    </citation>
    <scope>FUNCTION</scope>
    <scope>DISRUPTION PHENOTYPE</scope>
</reference>
<reference evidence="13" key="5">
    <citation type="journal article" date="2010" name="Nature">
        <title>An essential role for XBP-1 in host protection against immune activation in C. elegans.</title>
        <authorList>
            <person name="Richardson C.E."/>
            <person name="Kooistra T."/>
            <person name="Kim D.H."/>
        </authorList>
    </citation>
    <scope>FUNCTION</scope>
    <scope>MUTAGENESIS OF 34-GLN--PRO-287</scope>
</reference>
<reference evidence="13" key="6">
    <citation type="journal article" date="2011" name="PLoS Genet.">
        <title>Physiological IRE-1-XBP-1 and PEK-1 signaling in Caenorhabditis elegans larval development and immunity.</title>
        <authorList>
            <person name="Richardson C.E."/>
            <person name="Kinkel S."/>
            <person name="Kim D.H."/>
        </authorList>
    </citation>
    <scope>FUNCTION</scope>
    <scope>MUTAGENESIS OF 34-GLN--PRO-287</scope>
</reference>
<reference evidence="13" key="7">
    <citation type="journal article" date="2013" name="Cell">
        <title>XBP-1 is a cell-nonautonomous regulator of stress resistance and longevity.</title>
        <authorList>
            <person name="Taylor R.C."/>
            <person name="Dillin A."/>
        </authorList>
    </citation>
    <scope>FUNCTION (ISOFORM 2)</scope>
    <scope>MUTAGENESIS OF 34-GLN--PRO-287</scope>
</reference>
<reference evidence="13" key="8">
    <citation type="journal article" date="2014" name="Int. J. Biochem. Cell Biol.">
        <title>Sumoylation regulates ER stress response by modulating calreticulin gene expression in XBP-1-dependent mode in Caenorhabditis elegans.</title>
        <authorList>
            <person name="Lim Y."/>
            <person name="Lee D."/>
            <person name="Kalichamy K."/>
            <person name="Hong S.E."/>
            <person name="Michalak M."/>
            <person name="Ahnn J."/>
            <person name="Kim D.H."/>
            <person name="Lee S.K."/>
        </authorList>
    </citation>
    <scope>INTERACTION WITH UBC-9(ISOFORM 1 AND ISOFORM 2)</scope>
    <scope>SUMOYLATED</scope>
    <scope>DISRUPTION PHENOTYPE</scope>
</reference>
<reference evidence="13" key="9">
    <citation type="journal article" date="2019" name="Cell Rep.">
        <title>XBP-1 Remodels Lipid Metabolism to Extend Longevity.</title>
        <authorList>
            <person name="Imanikia S."/>
            <person name="Sheng M."/>
            <person name="Castro C."/>
            <person name="Griffin J.L."/>
            <person name="Taylor R.C."/>
        </authorList>
    </citation>
    <scope>FUNCTION(ISOFORM 2)</scope>
    <scope>MUTAGENESIS OF 34-GLN--PRO-287</scope>
</reference>
<reference evidence="13" key="10">
    <citation type="journal article" date="2019" name="Curr. Biol.">
        <title>Neuronal XBP-1 Activates Intestinal Lysosomes to Improve Proteostasis in C. elegans.</title>
        <authorList>
            <person name="Imanikia S."/>
            <person name="Oezbey N.P."/>
            <person name="Krueger C."/>
            <person name="Casanueva M.O."/>
            <person name="Taylor R.C."/>
        </authorList>
    </citation>
    <scope>FUNCTION(ISOFORM 2)</scope>
    <scope>DISRUPTION PHENOTYPE</scope>
</reference>
<reference key="11">
    <citation type="journal article" date="2019" name="Nat. Commun.">
        <title>Constitutive XBP-1s-mediated activation of the endoplasmic reticulum unfolded protein response protects against pathological tau.</title>
        <authorList>
            <person name="Waldherr S.M."/>
            <person name="Strovas T.J."/>
            <person name="Vadset T.A."/>
            <person name="Liachko N.F."/>
            <person name="Kraemer B.C."/>
        </authorList>
    </citation>
    <scope>FUNCTION (ISOFORM 2)</scope>
</reference>
<accession>G5EE07</accession>
<accession>Q8WRF0</accession>
<proteinExistence type="evidence at protein level"/>
<gene>
    <name evidence="17" type="primary">xbp-1</name>
    <name evidence="17" type="ORF">R74.3</name>
</gene>
<organism evidence="16">
    <name type="scientific">Caenorhabditis elegans</name>
    <dbReference type="NCBI Taxonomy" id="6239"/>
    <lineage>
        <taxon>Eukaryota</taxon>
        <taxon>Metazoa</taxon>
        <taxon>Ecdysozoa</taxon>
        <taxon>Nematoda</taxon>
        <taxon>Chromadorea</taxon>
        <taxon>Rhabditida</taxon>
        <taxon>Rhabditina</taxon>
        <taxon>Rhabditomorpha</taxon>
        <taxon>Rhabditoidea</taxon>
        <taxon>Rhabditidae</taxon>
        <taxon>Peloderinae</taxon>
        <taxon>Caenorhabditis</taxon>
    </lineage>
</organism>
<protein>
    <recommendedName>
        <fullName evidence="17">X-box-binding protein 1</fullName>
    </recommendedName>
</protein>